<accession>P63029</accession>
<accession>P14701</accession>
<evidence type="ECO:0000250" key="1">
    <source>
        <dbReference type="UniProtKB" id="P13693"/>
    </source>
</evidence>
<evidence type="ECO:0000255" key="2">
    <source>
        <dbReference type="PROSITE-ProRule" id="PRU01133"/>
    </source>
</evidence>
<evidence type="ECO:0000269" key="3">
    <source>
    </source>
</evidence>
<keyword id="KW-0106">Calcium</keyword>
<keyword id="KW-0963">Cytoplasm</keyword>
<keyword id="KW-0903">Direct protein sequencing</keyword>
<keyword id="KW-0597">Phosphoprotein</keyword>
<keyword id="KW-1185">Reference proteome</keyword>
<feature type="chain" id="PRO_0000211272" description="Translationally-controlled tumor protein">
    <location>
        <begin position="1"/>
        <end position="172"/>
    </location>
</feature>
<feature type="domain" description="TCTP" evidence="2">
    <location>
        <begin position="1"/>
        <end position="172"/>
    </location>
</feature>
<feature type="region of interest" description="Required for reduction of TSC22D1 protein stability" evidence="1">
    <location>
        <begin position="70"/>
        <end position="172"/>
    </location>
</feature>
<feature type="modified residue" description="Phosphoserine; by PLK1" evidence="1">
    <location>
        <position position="46"/>
    </location>
</feature>
<feature type="modified residue" description="Phosphoserine" evidence="1">
    <location>
        <position position="53"/>
    </location>
</feature>
<feature type="modified residue" description="Phosphoserine; by PLK1" evidence="1">
    <location>
        <position position="64"/>
    </location>
</feature>
<organism>
    <name type="scientific">Rattus norvegicus</name>
    <name type="common">Rat</name>
    <dbReference type="NCBI Taxonomy" id="10116"/>
    <lineage>
        <taxon>Eukaryota</taxon>
        <taxon>Metazoa</taxon>
        <taxon>Chordata</taxon>
        <taxon>Craniata</taxon>
        <taxon>Vertebrata</taxon>
        <taxon>Euteleostomi</taxon>
        <taxon>Mammalia</taxon>
        <taxon>Eutheria</taxon>
        <taxon>Euarchontoglires</taxon>
        <taxon>Glires</taxon>
        <taxon>Rodentia</taxon>
        <taxon>Myomorpha</taxon>
        <taxon>Muroidea</taxon>
        <taxon>Muridae</taxon>
        <taxon>Murinae</taxon>
        <taxon>Rattus</taxon>
    </lineage>
</organism>
<proteinExistence type="evidence at protein level"/>
<name>TCTP_RAT</name>
<comment type="function">
    <text evidence="1">Involved in calcium binding and microtubule stabilization (By similarity). Acts as a negative regulator of TSC22D1-mediated apoptosis, via interaction with and destabilization of TSC22D1 protein (By similarity).</text>
</comment>
<comment type="subunit">
    <text evidence="1 3">Homodimer (PubMed:11368327). Interacts with STEAP3 (By similarity). Interacts with TSC22D1; interaction results in the destabilization of TSC22D1 protein (By similarity).</text>
</comment>
<comment type="subcellular location">
    <subcellularLocation>
        <location evidence="1">Cytoplasm</location>
    </subcellularLocation>
</comment>
<comment type="similarity">
    <text evidence="2">Belongs to the TCTP family.</text>
</comment>
<reference key="1">
    <citation type="submission" date="1995-01" db="EMBL/GenBank/DDBJ databases">
        <authorList>
            <person name="Wen Y."/>
            <person name="Li G."/>
            <person name="Chen P."/>
            <person name="Bekhor I."/>
        </authorList>
    </citation>
    <scope>NUCLEOTIDE SEQUENCE [MRNA]</scope>
    <source>
        <strain>Sprague-Dawley</strain>
        <tissue>Lens</tissue>
    </source>
</reference>
<reference key="2">
    <citation type="journal article" date="2004" name="Genome Res.">
        <title>The status, quality, and expansion of the NIH full-length cDNA project: the Mammalian Gene Collection (MGC).</title>
        <authorList>
            <consortium name="The MGC Project Team"/>
        </authorList>
    </citation>
    <scope>NUCLEOTIDE SEQUENCE [LARGE SCALE MRNA]</scope>
    <source>
        <tissue>Ovary</tissue>
    </source>
</reference>
<reference key="3">
    <citation type="submission" date="2007-07" db="UniProtKB">
        <authorList>
            <person name="Lubec G."/>
            <person name="Chen W.-Q."/>
            <person name="Kang S.U."/>
        </authorList>
    </citation>
    <scope>PROTEIN SEQUENCE OF 6-34 AND 111-123</scope>
    <scope>IDENTIFICATION BY MASS SPECTROMETRY</scope>
    <source>
        <strain>Sprague-Dawley</strain>
        <tissue>Brain</tissue>
        <tissue>Hippocampus</tissue>
    </source>
</reference>
<reference key="4">
    <citation type="journal article" date="2000" name="Arch. Biochem. Biophys.">
        <title>Identification of the self-interaction of rat TCTP/IgE-dependent histamine-releasing factor using yeast two-hybrid system.</title>
        <authorList>
            <person name="Yoon T."/>
            <person name="Jung J."/>
            <person name="Kim M."/>
            <person name="Lee K.M."/>
            <person name="Choi E.C."/>
            <person name="Lee K."/>
        </authorList>
    </citation>
    <scope>SUBUNIT</scope>
</reference>
<reference key="5">
    <citation type="journal article" date="2000" name="Arch. Pharm. Res.">
        <title>Identification of the calcium binding sites in translationally controlled tumor protein.</title>
        <authorList>
            <person name="Kim M."/>
            <person name="Jung Y."/>
            <person name="Lee K."/>
            <person name="Kim C."/>
        </authorList>
    </citation>
    <scope>CALCIUM-BINDING</scope>
</reference>
<gene>
    <name type="primary">Tpt1</name>
    <name type="synonym">Trt</name>
</gene>
<dbReference type="EMBL" id="U20525">
    <property type="protein sequence ID" value="AAA62507.1"/>
    <property type="molecule type" value="mRNA"/>
</dbReference>
<dbReference type="EMBL" id="BC086358">
    <property type="protein sequence ID" value="AAH86358.1"/>
    <property type="molecule type" value="mRNA"/>
</dbReference>
<dbReference type="RefSeq" id="NP_446319.1">
    <property type="nucleotide sequence ID" value="NM_053867.2"/>
</dbReference>
<dbReference type="RefSeq" id="XP_063129979.1">
    <property type="nucleotide sequence ID" value="XM_063273909.1"/>
</dbReference>
<dbReference type="RefSeq" id="XP_063129980.1">
    <property type="nucleotide sequence ID" value="XM_063273910.1"/>
</dbReference>
<dbReference type="SMR" id="P63029"/>
<dbReference type="FunCoup" id="P63029">
    <property type="interactions" value="2430"/>
</dbReference>
<dbReference type="IntAct" id="P63029">
    <property type="interactions" value="4"/>
</dbReference>
<dbReference type="MINT" id="P63029"/>
<dbReference type="STRING" id="10116.ENSRNOP00000001383"/>
<dbReference type="iPTMnet" id="P63029"/>
<dbReference type="PhosphoSitePlus" id="P63029"/>
<dbReference type="SwissPalm" id="P63029"/>
<dbReference type="jPOST" id="P63029"/>
<dbReference type="PaxDb" id="10116-ENSRNOP00000001383"/>
<dbReference type="Ensembl" id="ENSRNOT00000001383.8">
    <property type="protein sequence ID" value="ENSRNOP00000001383.4"/>
    <property type="gene ID" value="ENSRNOG00000001049.8"/>
</dbReference>
<dbReference type="GeneID" id="116646"/>
<dbReference type="KEGG" id="rno:116646"/>
<dbReference type="UCSC" id="RGD:621623">
    <property type="organism name" value="rat"/>
</dbReference>
<dbReference type="AGR" id="RGD:621623"/>
<dbReference type="CTD" id="7178"/>
<dbReference type="RGD" id="621623">
    <property type="gene designation" value="Tpt1"/>
</dbReference>
<dbReference type="eggNOG" id="KOG1727">
    <property type="taxonomic scope" value="Eukaryota"/>
</dbReference>
<dbReference type="GeneTree" id="ENSGT00390000006051"/>
<dbReference type="HOGENOM" id="CLU_095877_0_1_1"/>
<dbReference type="InParanoid" id="P63029"/>
<dbReference type="OMA" id="CAMITEG"/>
<dbReference type="OrthoDB" id="5988874at2759"/>
<dbReference type="PhylomeDB" id="P63029"/>
<dbReference type="TreeFam" id="TF300238"/>
<dbReference type="PRO" id="PR:P63029"/>
<dbReference type="Proteomes" id="UP000002494">
    <property type="component" value="Chromosome 15"/>
</dbReference>
<dbReference type="Bgee" id="ENSRNOG00000001049">
    <property type="expression patterns" value="Expressed in thymus and 19 other cell types or tissues"/>
</dbReference>
<dbReference type="GO" id="GO:0005737">
    <property type="term" value="C:cytoplasm"/>
    <property type="evidence" value="ECO:0000266"/>
    <property type="project" value="RGD"/>
</dbReference>
<dbReference type="GO" id="GO:0005881">
    <property type="term" value="C:cytoplasmic microtubule"/>
    <property type="evidence" value="ECO:0000266"/>
    <property type="project" value="RGD"/>
</dbReference>
<dbReference type="GO" id="GO:0005615">
    <property type="term" value="C:extracellular space"/>
    <property type="evidence" value="ECO:0000266"/>
    <property type="project" value="RGD"/>
</dbReference>
<dbReference type="GO" id="GO:0005771">
    <property type="term" value="C:multivesicular body"/>
    <property type="evidence" value="ECO:0000266"/>
    <property type="project" value="RGD"/>
</dbReference>
<dbReference type="GO" id="GO:0005654">
    <property type="term" value="C:nucleoplasm"/>
    <property type="evidence" value="ECO:0000266"/>
    <property type="project" value="RGD"/>
</dbReference>
<dbReference type="GO" id="GO:0005634">
    <property type="term" value="C:nucleus"/>
    <property type="evidence" value="ECO:0000266"/>
    <property type="project" value="RGD"/>
</dbReference>
<dbReference type="GO" id="GO:0000922">
    <property type="term" value="C:spindle pole"/>
    <property type="evidence" value="ECO:0000250"/>
    <property type="project" value="UniProtKB"/>
</dbReference>
<dbReference type="GO" id="GO:0005509">
    <property type="term" value="F:calcium ion binding"/>
    <property type="evidence" value="ECO:0000266"/>
    <property type="project" value="RGD"/>
</dbReference>
<dbReference type="GO" id="GO:0140297">
    <property type="term" value="F:DNA-binding transcription factor binding"/>
    <property type="evidence" value="ECO:0000266"/>
    <property type="project" value="RGD"/>
</dbReference>
<dbReference type="GO" id="GO:2000384">
    <property type="term" value="P:negative regulation of ectoderm development"/>
    <property type="evidence" value="ECO:0000266"/>
    <property type="project" value="RGD"/>
</dbReference>
<dbReference type="GO" id="GO:1902230">
    <property type="term" value="P:negative regulation of intrinsic apoptotic signaling pathway in response to DNA damage"/>
    <property type="evidence" value="ECO:0000266"/>
    <property type="project" value="RGD"/>
</dbReference>
<dbReference type="GO" id="GO:0009615">
    <property type="term" value="P:response to virus"/>
    <property type="evidence" value="ECO:0000266"/>
    <property type="project" value="RGD"/>
</dbReference>
<dbReference type="GO" id="GO:0007283">
    <property type="term" value="P:spermatogenesis"/>
    <property type="evidence" value="ECO:0000270"/>
    <property type="project" value="RGD"/>
</dbReference>
<dbReference type="GO" id="GO:0019827">
    <property type="term" value="P:stem cell population maintenance"/>
    <property type="evidence" value="ECO:0000266"/>
    <property type="project" value="RGD"/>
</dbReference>
<dbReference type="FunFam" id="2.170.150.10:FF:000001">
    <property type="entry name" value="Tumor protein, translationally-controlled 1"/>
    <property type="match status" value="1"/>
</dbReference>
<dbReference type="Gene3D" id="2.170.150.10">
    <property type="entry name" value="Metal Binding Protein, Guanine Nucleotide Exchange Factor, Chain A"/>
    <property type="match status" value="1"/>
</dbReference>
<dbReference type="InterPro" id="IPR011057">
    <property type="entry name" value="Mss4-like_sf"/>
</dbReference>
<dbReference type="InterPro" id="IPR011323">
    <property type="entry name" value="Mss4/transl-control_tumour"/>
</dbReference>
<dbReference type="InterPro" id="IPR034737">
    <property type="entry name" value="TCTP"/>
</dbReference>
<dbReference type="InterPro" id="IPR018103">
    <property type="entry name" value="Translation_control_tumour_CS"/>
</dbReference>
<dbReference type="InterPro" id="IPR018105">
    <property type="entry name" value="Translational_control_tumour_p"/>
</dbReference>
<dbReference type="PANTHER" id="PTHR11991">
    <property type="entry name" value="TRANSLATIONALLY CONTROLLED TUMOR PROTEIN-RELATED"/>
    <property type="match status" value="1"/>
</dbReference>
<dbReference type="PANTHER" id="PTHR11991:SF0">
    <property type="entry name" value="TRANSLATIONALLY-CONTROLLED TUMOR PROTEIN"/>
    <property type="match status" value="1"/>
</dbReference>
<dbReference type="Pfam" id="PF00838">
    <property type="entry name" value="TCTP"/>
    <property type="match status" value="1"/>
</dbReference>
<dbReference type="PRINTS" id="PR01653">
    <property type="entry name" value="TCTPROTEIN"/>
</dbReference>
<dbReference type="SUPFAM" id="SSF51316">
    <property type="entry name" value="Mss4-like"/>
    <property type="match status" value="1"/>
</dbReference>
<dbReference type="PROSITE" id="PS01002">
    <property type="entry name" value="TCTP_1"/>
    <property type="match status" value="1"/>
</dbReference>
<dbReference type="PROSITE" id="PS01003">
    <property type="entry name" value="TCTP_2"/>
    <property type="match status" value="1"/>
</dbReference>
<dbReference type="PROSITE" id="PS51797">
    <property type="entry name" value="TCTP_3"/>
    <property type="match status" value="1"/>
</dbReference>
<sequence>MIIYRDLISHDELFSDIYKIREIADGLCLEVEGKMVSRTEGAIDDSLIGGNASAEGPEGEGTESTVVTGVDIVMNHHLQETSFTKEAYKKYIKDYMKSLKGKLEEQKPERVKPFMTGAAEQIKHILANFNNYQFFIGENMNPDGMVALLDYREDGVTPFMIFFKDGLEMEKC</sequence>
<protein>
    <recommendedName>
        <fullName>Translationally-controlled tumor protein</fullName>
        <shortName>TCTP</shortName>
    </recommendedName>
    <alternativeName>
        <fullName>Lens epithelial protein</fullName>
    </alternativeName>
</protein>